<evidence type="ECO:0000255" key="1">
    <source>
        <dbReference type="HAMAP-Rule" id="MF_00129"/>
    </source>
</evidence>
<comment type="function">
    <text evidence="1">NAD-binding protein involved in the addition of a carboxymethylaminomethyl (cmnm) group at the wobble position (U34) of certain tRNAs, forming tRNA-cmnm(5)s(2)U34.</text>
</comment>
<comment type="cofactor">
    <cofactor evidence="1">
        <name>FAD</name>
        <dbReference type="ChEBI" id="CHEBI:57692"/>
    </cofactor>
</comment>
<comment type="subunit">
    <text evidence="1">Homodimer. Heterotetramer of two MnmE and two MnmG subunits.</text>
</comment>
<comment type="subcellular location">
    <subcellularLocation>
        <location evidence="1">Cytoplasm</location>
    </subcellularLocation>
</comment>
<comment type="similarity">
    <text evidence="1">Belongs to the MnmG family.</text>
</comment>
<dbReference type="EMBL" id="CP000051">
    <property type="protein sequence ID" value="AAX50773.1"/>
    <property type="molecule type" value="Genomic_DNA"/>
</dbReference>
<dbReference type="RefSeq" id="WP_011324754.1">
    <property type="nucleotide sequence ID" value="NC_007429.1"/>
</dbReference>
<dbReference type="SMR" id="Q3KLJ9"/>
<dbReference type="KEGG" id="cta:CTA_0546"/>
<dbReference type="HOGENOM" id="CLU_007831_2_2_0"/>
<dbReference type="Proteomes" id="UP000002532">
    <property type="component" value="Chromosome"/>
</dbReference>
<dbReference type="GO" id="GO:0005829">
    <property type="term" value="C:cytosol"/>
    <property type="evidence" value="ECO:0007669"/>
    <property type="project" value="TreeGrafter"/>
</dbReference>
<dbReference type="GO" id="GO:0050660">
    <property type="term" value="F:flavin adenine dinucleotide binding"/>
    <property type="evidence" value="ECO:0007669"/>
    <property type="project" value="UniProtKB-UniRule"/>
</dbReference>
<dbReference type="GO" id="GO:0030488">
    <property type="term" value="P:tRNA methylation"/>
    <property type="evidence" value="ECO:0007669"/>
    <property type="project" value="TreeGrafter"/>
</dbReference>
<dbReference type="GO" id="GO:0002098">
    <property type="term" value="P:tRNA wobble uridine modification"/>
    <property type="evidence" value="ECO:0007669"/>
    <property type="project" value="InterPro"/>
</dbReference>
<dbReference type="FunFam" id="1.10.150.570:FF:000001">
    <property type="entry name" value="tRNA uridine 5-carboxymethylaminomethyl modification enzyme MnmG"/>
    <property type="match status" value="1"/>
</dbReference>
<dbReference type="FunFam" id="3.50.50.60:FF:000002">
    <property type="entry name" value="tRNA uridine 5-carboxymethylaminomethyl modification enzyme MnmG"/>
    <property type="match status" value="1"/>
</dbReference>
<dbReference type="FunFam" id="3.50.50.60:FF:000010">
    <property type="entry name" value="tRNA uridine 5-carboxymethylaminomethyl modification enzyme MnmG"/>
    <property type="match status" value="1"/>
</dbReference>
<dbReference type="Gene3D" id="3.50.50.60">
    <property type="entry name" value="FAD/NAD(P)-binding domain"/>
    <property type="match status" value="2"/>
</dbReference>
<dbReference type="Gene3D" id="1.10.150.570">
    <property type="entry name" value="GidA associated domain, C-terminal subdomain"/>
    <property type="match status" value="1"/>
</dbReference>
<dbReference type="Gene3D" id="1.10.10.1800">
    <property type="entry name" value="tRNA uridine 5-carboxymethylaminomethyl modification enzyme MnmG/GidA"/>
    <property type="match status" value="1"/>
</dbReference>
<dbReference type="HAMAP" id="MF_00129">
    <property type="entry name" value="MnmG_GidA"/>
    <property type="match status" value="1"/>
</dbReference>
<dbReference type="InterPro" id="IPR036188">
    <property type="entry name" value="FAD/NAD-bd_sf"/>
</dbReference>
<dbReference type="InterPro" id="IPR049312">
    <property type="entry name" value="GIDA_C_N"/>
</dbReference>
<dbReference type="InterPro" id="IPR004416">
    <property type="entry name" value="MnmG"/>
</dbReference>
<dbReference type="InterPro" id="IPR002218">
    <property type="entry name" value="MnmG-rel"/>
</dbReference>
<dbReference type="InterPro" id="IPR020595">
    <property type="entry name" value="MnmG-rel_CS"/>
</dbReference>
<dbReference type="InterPro" id="IPR026904">
    <property type="entry name" value="MnmG_C"/>
</dbReference>
<dbReference type="InterPro" id="IPR047001">
    <property type="entry name" value="MnmG_C_subdom"/>
</dbReference>
<dbReference type="InterPro" id="IPR044920">
    <property type="entry name" value="MnmG_C_subdom_sf"/>
</dbReference>
<dbReference type="InterPro" id="IPR040131">
    <property type="entry name" value="MnmG_N"/>
</dbReference>
<dbReference type="NCBIfam" id="TIGR00136">
    <property type="entry name" value="mnmG_gidA"/>
    <property type="match status" value="1"/>
</dbReference>
<dbReference type="PANTHER" id="PTHR11806">
    <property type="entry name" value="GLUCOSE INHIBITED DIVISION PROTEIN A"/>
    <property type="match status" value="1"/>
</dbReference>
<dbReference type="PANTHER" id="PTHR11806:SF0">
    <property type="entry name" value="PROTEIN MTO1 HOMOLOG, MITOCHONDRIAL"/>
    <property type="match status" value="1"/>
</dbReference>
<dbReference type="Pfam" id="PF01134">
    <property type="entry name" value="GIDA"/>
    <property type="match status" value="1"/>
</dbReference>
<dbReference type="Pfam" id="PF21680">
    <property type="entry name" value="GIDA_C_1st"/>
    <property type="match status" value="1"/>
</dbReference>
<dbReference type="Pfam" id="PF13932">
    <property type="entry name" value="SAM_GIDA_C"/>
    <property type="match status" value="1"/>
</dbReference>
<dbReference type="SMART" id="SM01228">
    <property type="entry name" value="GIDA_assoc_3"/>
    <property type="match status" value="1"/>
</dbReference>
<dbReference type="SUPFAM" id="SSF51905">
    <property type="entry name" value="FAD/NAD(P)-binding domain"/>
    <property type="match status" value="1"/>
</dbReference>
<dbReference type="PROSITE" id="PS01280">
    <property type="entry name" value="GIDA_1"/>
    <property type="match status" value="1"/>
</dbReference>
<dbReference type="PROSITE" id="PS01281">
    <property type="entry name" value="GIDA_2"/>
    <property type="match status" value="1"/>
</dbReference>
<gene>
    <name evidence="1" type="primary">mnmG</name>
    <name evidence="1" type="synonym">gidA</name>
    <name type="ordered locus">CTA_0546</name>
</gene>
<sequence>MWTFPVDYDVIVIGAGHAGCEAAYCAAKMGASVLLLTSNLDTVAKLSCNPAVGGIGKGHIVREIDALGGIMAEITDLSGIQFRILNQTKGPAVRAPRAQVDKQLYHIHMKRLLEQVPGLHIMQGTAEALLDNGEKVLGVSTKEGWAYLGKTVVLSSGTFMRGLIHIGTQNFSGGRLGDAASLGLSEDLKRLGFPLGRLKTGTPARLLASSIDFSVMEEQPGDHNVCFVHRNEMFVPTLPQVSCHITHTTDQTKDLITKNLHRSALYGGRIEGVGPRYCPSIEDKIVKFADKDRHHIFIEPEGLNTQEVYVNGLSTSMPFDVQYDIIRSVSGLENAIITRPAYAIEYDYVHGNVIFPSLESKLIEGLFLCGQINGTTGYEEAAAQGLIAGVNAVNKVLRHPPFVPSRQESYIGVMLDDLTTQVLDEPYRMFTSRAEHRLLLRQDNAGMRLSHYGHSLGLLSSERYAMFQEQKACIEQEKERLSKTFRKYGDTVVPLTKVLCRPEVSYQQLLTEFPADVRDLGPVVGASLEMEIKYSGYISRQQTLIRSMERSENISIPEDIDYHSISALSLEAREKLSKFTPRTIGSAARISGISVADIQVLMVSLKKDAH</sequence>
<feature type="chain" id="PRO_1000016579" description="tRNA uridine 5-carboxymethylaminomethyl modification enzyme MnmG">
    <location>
        <begin position="1"/>
        <end position="610"/>
    </location>
</feature>
<feature type="binding site" evidence="1">
    <location>
        <begin position="14"/>
        <end position="19"/>
    </location>
    <ligand>
        <name>FAD</name>
        <dbReference type="ChEBI" id="CHEBI:57692"/>
    </ligand>
</feature>
<feature type="binding site" evidence="1">
    <location>
        <begin position="274"/>
        <end position="288"/>
    </location>
    <ligand>
        <name>NAD(+)</name>
        <dbReference type="ChEBI" id="CHEBI:57540"/>
    </ligand>
</feature>
<reference key="1">
    <citation type="journal article" date="2005" name="Infect. Immun.">
        <title>Comparative genomic analysis of Chlamydia trachomatis oculotropic and genitotropic strains.</title>
        <authorList>
            <person name="Carlson J.H."/>
            <person name="Porcella S.F."/>
            <person name="McClarty G."/>
            <person name="Caldwell H.D."/>
        </authorList>
    </citation>
    <scope>NUCLEOTIDE SEQUENCE [LARGE SCALE GENOMIC DNA]</scope>
    <source>
        <strain>ATCC VR-571B / DSM 19440 / HAR-13</strain>
    </source>
</reference>
<organism>
    <name type="scientific">Chlamydia trachomatis serovar A (strain ATCC VR-571B / DSM 19440 / HAR-13)</name>
    <dbReference type="NCBI Taxonomy" id="315277"/>
    <lineage>
        <taxon>Bacteria</taxon>
        <taxon>Pseudomonadati</taxon>
        <taxon>Chlamydiota</taxon>
        <taxon>Chlamydiia</taxon>
        <taxon>Chlamydiales</taxon>
        <taxon>Chlamydiaceae</taxon>
        <taxon>Chlamydia/Chlamydophila group</taxon>
        <taxon>Chlamydia</taxon>
    </lineage>
</organism>
<proteinExistence type="inferred from homology"/>
<protein>
    <recommendedName>
        <fullName evidence="1">tRNA uridine 5-carboxymethylaminomethyl modification enzyme MnmG</fullName>
    </recommendedName>
    <alternativeName>
        <fullName evidence="1">Glucose-inhibited division protein A</fullName>
    </alternativeName>
</protein>
<name>MNMG_CHLTA</name>
<accession>Q3KLJ9</accession>
<keyword id="KW-0963">Cytoplasm</keyword>
<keyword id="KW-0274">FAD</keyword>
<keyword id="KW-0285">Flavoprotein</keyword>
<keyword id="KW-0520">NAD</keyword>
<keyword id="KW-0819">tRNA processing</keyword>